<evidence type="ECO:0000250" key="1"/>
<evidence type="ECO:0000250" key="2">
    <source>
        <dbReference type="UniProtKB" id="Q8LNV6"/>
    </source>
</evidence>
<evidence type="ECO:0000250" key="3">
    <source>
        <dbReference type="UniProtKB" id="Q9FUJ1"/>
    </source>
</evidence>
<evidence type="ECO:0000250" key="4">
    <source>
        <dbReference type="UniProtKB" id="Q9FUJ3"/>
    </source>
</evidence>
<evidence type="ECO:0000250" key="5">
    <source>
        <dbReference type="UniProtKB" id="Q9T0N8"/>
    </source>
</evidence>
<evidence type="ECO:0000255" key="6"/>
<evidence type="ECO:0000255" key="7">
    <source>
        <dbReference type="PROSITE-ProRule" id="PRU00718"/>
    </source>
</evidence>
<evidence type="ECO:0000269" key="8">
    <source>
    </source>
</evidence>
<evidence type="ECO:0000269" key="9">
    <source>
    </source>
</evidence>
<evidence type="ECO:0000303" key="10">
    <source>
    </source>
</evidence>
<evidence type="ECO:0000305" key="11"/>
<evidence type="ECO:0000312" key="12">
    <source>
        <dbReference type="EMBL" id="BAB56095.1"/>
    </source>
</evidence>
<evidence type="ECO:0000312" key="13">
    <source>
        <dbReference type="EMBL" id="BAB89407.1"/>
    </source>
</evidence>
<evidence type="ECO:0000312" key="14">
    <source>
        <dbReference type="EMBL" id="BAS70876.1"/>
    </source>
</evidence>
<evidence type="ECO:0000312" key="15">
    <source>
        <dbReference type="EMBL" id="EEE54051.1"/>
    </source>
</evidence>
<dbReference type="EC" id="1.5.99.12" evidence="8"/>
<dbReference type="EMBL" id="AB205193">
    <property type="protein sequence ID" value="BAE16612.1"/>
    <property type="molecule type" value="mRNA"/>
</dbReference>
<dbReference type="EMBL" id="AP003200">
    <property type="protein sequence ID" value="BAB89407.1"/>
    <property type="status" value="ALT_INIT"/>
    <property type="molecule type" value="Genomic_DNA"/>
</dbReference>
<dbReference type="EMBL" id="AP003244">
    <property type="protein sequence ID" value="BAB56095.1"/>
    <property type="status" value="ALT_INIT"/>
    <property type="molecule type" value="Genomic_DNA"/>
</dbReference>
<dbReference type="EMBL" id="AP014957">
    <property type="protein sequence ID" value="BAS70876.1"/>
    <property type="molecule type" value="Genomic_DNA"/>
</dbReference>
<dbReference type="EMBL" id="CM000138">
    <property type="protein sequence ID" value="EEE54051.1"/>
    <property type="status" value="ALT_SEQ"/>
    <property type="molecule type" value="Genomic_DNA"/>
</dbReference>
<dbReference type="EMBL" id="AK243684">
    <property type="protein sequence ID" value="BAH01708.1"/>
    <property type="molecule type" value="mRNA"/>
</dbReference>
<dbReference type="RefSeq" id="XP_015629416.1">
    <property type="nucleotide sequence ID" value="XM_015773930.1"/>
</dbReference>
<dbReference type="SMR" id="Q4ADV8"/>
<dbReference type="FunCoup" id="Q4ADV8">
    <property type="interactions" value="96"/>
</dbReference>
<dbReference type="STRING" id="39947.Q4ADV8"/>
<dbReference type="GlyCosmos" id="Q4ADV8">
    <property type="glycosylation" value="1 site, No reported glycans"/>
</dbReference>
<dbReference type="PaxDb" id="39947-Q4ADV8"/>
<dbReference type="EnsemblPlants" id="Os01t0197700-01">
    <property type="protein sequence ID" value="Os01t0197700-01"/>
    <property type="gene ID" value="Os01g0197700"/>
</dbReference>
<dbReference type="Gramene" id="Os01t0197700-01">
    <property type="protein sequence ID" value="Os01t0197700-01"/>
    <property type="gene ID" value="Os01g0197700"/>
</dbReference>
<dbReference type="eggNOG" id="KOG1231">
    <property type="taxonomic scope" value="Eukaryota"/>
</dbReference>
<dbReference type="HOGENOM" id="CLU_024955_1_0_1"/>
<dbReference type="InParanoid" id="Q4ADV8"/>
<dbReference type="OMA" id="MEVLMFC"/>
<dbReference type="OrthoDB" id="415825at2759"/>
<dbReference type="Proteomes" id="UP000000763">
    <property type="component" value="Chromosome 1"/>
</dbReference>
<dbReference type="Proteomes" id="UP000007752">
    <property type="component" value="Chromosome 1"/>
</dbReference>
<dbReference type="Proteomes" id="UP000059680">
    <property type="component" value="Chromosome 1"/>
</dbReference>
<dbReference type="GO" id="GO:0005576">
    <property type="term" value="C:extracellular region"/>
    <property type="evidence" value="ECO:0007669"/>
    <property type="project" value="UniProtKB-SubCell"/>
</dbReference>
<dbReference type="GO" id="GO:0019139">
    <property type="term" value="F:cytokinin dehydrogenase activity"/>
    <property type="evidence" value="ECO:0000314"/>
    <property type="project" value="UniProtKB"/>
</dbReference>
<dbReference type="GO" id="GO:0071949">
    <property type="term" value="F:FAD binding"/>
    <property type="evidence" value="ECO:0007669"/>
    <property type="project" value="InterPro"/>
</dbReference>
<dbReference type="GO" id="GO:0016491">
    <property type="term" value="F:oxidoreductase activity"/>
    <property type="evidence" value="ECO:0000318"/>
    <property type="project" value="GO_Central"/>
</dbReference>
<dbReference type="GO" id="GO:0009690">
    <property type="term" value="P:cytokinin metabolic process"/>
    <property type="evidence" value="ECO:0007669"/>
    <property type="project" value="InterPro"/>
</dbReference>
<dbReference type="GO" id="GO:0009736">
    <property type="term" value="P:cytokinin-activated signaling pathway"/>
    <property type="evidence" value="ECO:0007669"/>
    <property type="project" value="UniProtKB-KW"/>
</dbReference>
<dbReference type="GO" id="GO:0010229">
    <property type="term" value="P:inflorescence development"/>
    <property type="evidence" value="ECO:0000315"/>
    <property type="project" value="UniProtKB"/>
</dbReference>
<dbReference type="FunFam" id="3.40.462.10:FF:000001">
    <property type="entry name" value="Cytokinin dehydrogenase 2"/>
    <property type="match status" value="1"/>
</dbReference>
<dbReference type="Gene3D" id="3.30.465.10">
    <property type="match status" value="1"/>
</dbReference>
<dbReference type="Gene3D" id="3.40.462.10">
    <property type="entry name" value="FAD-linked oxidases, C-terminal domain"/>
    <property type="match status" value="1"/>
</dbReference>
<dbReference type="Gene3D" id="3.30.43.10">
    <property type="entry name" value="Uridine Diphospho-n-acetylenolpyruvylglucosamine Reductase, domain 2"/>
    <property type="match status" value="1"/>
</dbReference>
<dbReference type="InterPro" id="IPR016170">
    <property type="entry name" value="Cytok_DH_C_sf"/>
</dbReference>
<dbReference type="InterPro" id="IPR015345">
    <property type="entry name" value="Cytokinin_DH_FAD/cytokin-bd"/>
</dbReference>
<dbReference type="InterPro" id="IPR016166">
    <property type="entry name" value="FAD-bd_PCMH"/>
</dbReference>
<dbReference type="InterPro" id="IPR036318">
    <property type="entry name" value="FAD-bd_PCMH-like_sf"/>
</dbReference>
<dbReference type="InterPro" id="IPR016167">
    <property type="entry name" value="FAD-bd_PCMH_sub1"/>
</dbReference>
<dbReference type="InterPro" id="IPR016169">
    <property type="entry name" value="FAD-bd_PCMH_sub2"/>
</dbReference>
<dbReference type="InterPro" id="IPR016164">
    <property type="entry name" value="FAD-linked_Oxase-like_C"/>
</dbReference>
<dbReference type="InterPro" id="IPR050432">
    <property type="entry name" value="FAD-linked_Oxidoreductases_BP"/>
</dbReference>
<dbReference type="InterPro" id="IPR006094">
    <property type="entry name" value="Oxid_FAD_bind_N"/>
</dbReference>
<dbReference type="PANTHER" id="PTHR13878:SF161">
    <property type="entry name" value="CYTOKININ DEHYDROGENASE 2"/>
    <property type="match status" value="1"/>
</dbReference>
<dbReference type="PANTHER" id="PTHR13878">
    <property type="entry name" value="GULONOLACTONE OXIDASE"/>
    <property type="match status" value="1"/>
</dbReference>
<dbReference type="Pfam" id="PF09265">
    <property type="entry name" value="Cytokin-bind"/>
    <property type="match status" value="1"/>
</dbReference>
<dbReference type="Pfam" id="PF01565">
    <property type="entry name" value="FAD_binding_4"/>
    <property type="match status" value="1"/>
</dbReference>
<dbReference type="SUPFAM" id="SSF56176">
    <property type="entry name" value="FAD-binding/transporter-associated domain-like"/>
    <property type="match status" value="1"/>
</dbReference>
<dbReference type="SUPFAM" id="SSF55103">
    <property type="entry name" value="FAD-linked oxidases, C-terminal domain"/>
    <property type="match status" value="1"/>
</dbReference>
<dbReference type="PROSITE" id="PS51387">
    <property type="entry name" value="FAD_PCMH"/>
    <property type="match status" value="1"/>
</dbReference>
<reference key="1">
    <citation type="journal article" date="2005" name="Science">
        <title>Cytokinin oxidase regulates rice grain production.</title>
        <authorList>
            <person name="Ashikari M."/>
            <person name="Sakakibara H."/>
            <person name="Lin S."/>
            <person name="Yamamoto T."/>
            <person name="Takashi T."/>
            <person name="Nishimura A."/>
            <person name="Angeles E.R."/>
            <person name="Qian Q."/>
            <person name="Kitano H."/>
            <person name="Matsuoka M."/>
        </authorList>
    </citation>
    <scope>NUCLEOTIDE SEQUENCE [MRNA]</scope>
    <scope>FUNCTION</scope>
    <scope>CATALYTIC ACTIVITY</scope>
    <scope>TISSUE SPECIFICITY</scope>
    <scope>DISRUPTION PHENOTYPE</scope>
    <scope>GENE FAMILY</scope>
    <scope>NOMENCLATURE</scope>
    <source>
        <strain>cv. Koshihikari</strain>
    </source>
</reference>
<reference key="2">
    <citation type="journal article" date="2002" name="Nature">
        <title>The genome sequence and structure of rice chromosome 1.</title>
        <authorList>
            <person name="Sasaki T."/>
            <person name="Matsumoto T."/>
            <person name="Yamamoto K."/>
            <person name="Sakata K."/>
            <person name="Baba T."/>
            <person name="Katayose Y."/>
            <person name="Wu J."/>
            <person name="Niimura Y."/>
            <person name="Cheng Z."/>
            <person name="Nagamura Y."/>
            <person name="Antonio B.A."/>
            <person name="Kanamori H."/>
            <person name="Hosokawa S."/>
            <person name="Masukawa M."/>
            <person name="Arikawa K."/>
            <person name="Chiden Y."/>
            <person name="Hayashi M."/>
            <person name="Okamoto M."/>
            <person name="Ando T."/>
            <person name="Aoki H."/>
            <person name="Arita K."/>
            <person name="Hamada M."/>
            <person name="Harada C."/>
            <person name="Hijishita S."/>
            <person name="Honda M."/>
            <person name="Ichikawa Y."/>
            <person name="Idonuma A."/>
            <person name="Iijima M."/>
            <person name="Ikeda M."/>
            <person name="Ikeno M."/>
            <person name="Ito S."/>
            <person name="Ito T."/>
            <person name="Ito Y."/>
            <person name="Ito Y."/>
            <person name="Iwabuchi A."/>
            <person name="Kamiya K."/>
            <person name="Karasawa W."/>
            <person name="Katagiri S."/>
            <person name="Kikuta A."/>
            <person name="Kobayashi N."/>
            <person name="Kono I."/>
            <person name="Machita K."/>
            <person name="Maehara T."/>
            <person name="Mizuno H."/>
            <person name="Mizubayashi T."/>
            <person name="Mukai Y."/>
            <person name="Nagasaki H."/>
            <person name="Nakashima M."/>
            <person name="Nakama Y."/>
            <person name="Nakamichi Y."/>
            <person name="Nakamura M."/>
            <person name="Namiki N."/>
            <person name="Negishi M."/>
            <person name="Ohta I."/>
            <person name="Ono N."/>
            <person name="Saji S."/>
            <person name="Sakai K."/>
            <person name="Shibata M."/>
            <person name="Shimokawa T."/>
            <person name="Shomura A."/>
            <person name="Song J."/>
            <person name="Takazaki Y."/>
            <person name="Terasawa K."/>
            <person name="Tsuji K."/>
            <person name="Waki K."/>
            <person name="Yamagata H."/>
            <person name="Yamane H."/>
            <person name="Yoshiki S."/>
            <person name="Yoshihara R."/>
            <person name="Yukawa K."/>
            <person name="Zhong H."/>
            <person name="Iwama H."/>
            <person name="Endo T."/>
            <person name="Ito H."/>
            <person name="Hahn J.H."/>
            <person name="Kim H.-I."/>
            <person name="Eun M.-Y."/>
            <person name="Yano M."/>
            <person name="Jiang J."/>
            <person name="Gojobori T."/>
        </authorList>
    </citation>
    <scope>NUCLEOTIDE SEQUENCE [LARGE SCALE GENOMIC DNA]</scope>
    <source>
        <strain>cv. Nipponbare</strain>
    </source>
</reference>
<reference key="3">
    <citation type="journal article" date="2005" name="Nature">
        <title>The map-based sequence of the rice genome.</title>
        <authorList>
            <consortium name="International rice genome sequencing project (IRGSP)"/>
        </authorList>
    </citation>
    <scope>NUCLEOTIDE SEQUENCE [LARGE SCALE GENOMIC DNA]</scope>
    <source>
        <strain>cv. Nipponbare</strain>
    </source>
</reference>
<reference key="4">
    <citation type="journal article" date="2013" name="Rice">
        <title>Improvement of the Oryza sativa Nipponbare reference genome using next generation sequence and optical map data.</title>
        <authorList>
            <person name="Kawahara Y."/>
            <person name="de la Bastide M."/>
            <person name="Hamilton J.P."/>
            <person name="Kanamori H."/>
            <person name="McCombie W.R."/>
            <person name="Ouyang S."/>
            <person name="Schwartz D.C."/>
            <person name="Tanaka T."/>
            <person name="Wu J."/>
            <person name="Zhou S."/>
            <person name="Childs K.L."/>
            <person name="Davidson R.M."/>
            <person name="Lin H."/>
            <person name="Quesada-Ocampo L."/>
            <person name="Vaillancourt B."/>
            <person name="Sakai H."/>
            <person name="Lee S.S."/>
            <person name="Kim J."/>
            <person name="Numa H."/>
            <person name="Itoh T."/>
            <person name="Buell C.R."/>
            <person name="Matsumoto T."/>
        </authorList>
    </citation>
    <scope>GENOME REANNOTATION</scope>
    <source>
        <strain>cv. Nipponbare</strain>
    </source>
</reference>
<reference key="5">
    <citation type="journal article" date="2005" name="PLoS Biol.">
        <title>The genomes of Oryza sativa: a history of duplications.</title>
        <authorList>
            <person name="Yu J."/>
            <person name="Wang J."/>
            <person name="Lin W."/>
            <person name="Li S."/>
            <person name="Li H."/>
            <person name="Zhou J."/>
            <person name="Ni P."/>
            <person name="Dong W."/>
            <person name="Hu S."/>
            <person name="Zeng C."/>
            <person name="Zhang J."/>
            <person name="Zhang Y."/>
            <person name="Li R."/>
            <person name="Xu Z."/>
            <person name="Li S."/>
            <person name="Li X."/>
            <person name="Zheng H."/>
            <person name="Cong L."/>
            <person name="Lin L."/>
            <person name="Yin J."/>
            <person name="Geng J."/>
            <person name="Li G."/>
            <person name="Shi J."/>
            <person name="Liu J."/>
            <person name="Lv H."/>
            <person name="Li J."/>
            <person name="Wang J."/>
            <person name="Deng Y."/>
            <person name="Ran L."/>
            <person name="Shi X."/>
            <person name="Wang X."/>
            <person name="Wu Q."/>
            <person name="Li C."/>
            <person name="Ren X."/>
            <person name="Wang J."/>
            <person name="Wang X."/>
            <person name="Li D."/>
            <person name="Liu D."/>
            <person name="Zhang X."/>
            <person name="Ji Z."/>
            <person name="Zhao W."/>
            <person name="Sun Y."/>
            <person name="Zhang Z."/>
            <person name="Bao J."/>
            <person name="Han Y."/>
            <person name="Dong L."/>
            <person name="Ji J."/>
            <person name="Chen P."/>
            <person name="Wu S."/>
            <person name="Liu J."/>
            <person name="Xiao Y."/>
            <person name="Bu D."/>
            <person name="Tan J."/>
            <person name="Yang L."/>
            <person name="Ye C."/>
            <person name="Zhang J."/>
            <person name="Xu J."/>
            <person name="Zhou Y."/>
            <person name="Yu Y."/>
            <person name="Zhang B."/>
            <person name="Zhuang S."/>
            <person name="Wei H."/>
            <person name="Liu B."/>
            <person name="Lei M."/>
            <person name="Yu H."/>
            <person name="Li Y."/>
            <person name="Xu H."/>
            <person name="Wei S."/>
            <person name="He X."/>
            <person name="Fang L."/>
            <person name="Zhang Z."/>
            <person name="Zhang Y."/>
            <person name="Huang X."/>
            <person name="Su Z."/>
            <person name="Tong W."/>
            <person name="Li J."/>
            <person name="Tong Z."/>
            <person name="Li S."/>
            <person name="Ye J."/>
            <person name="Wang L."/>
            <person name="Fang L."/>
            <person name="Lei T."/>
            <person name="Chen C.-S."/>
            <person name="Chen H.-C."/>
            <person name="Xu Z."/>
            <person name="Li H."/>
            <person name="Huang H."/>
            <person name="Zhang F."/>
            <person name="Xu H."/>
            <person name="Li N."/>
            <person name="Zhao C."/>
            <person name="Li S."/>
            <person name="Dong L."/>
            <person name="Huang Y."/>
            <person name="Li L."/>
            <person name="Xi Y."/>
            <person name="Qi Q."/>
            <person name="Li W."/>
            <person name="Zhang B."/>
            <person name="Hu W."/>
            <person name="Zhang Y."/>
            <person name="Tian X."/>
            <person name="Jiao Y."/>
            <person name="Liang X."/>
            <person name="Jin J."/>
            <person name="Gao L."/>
            <person name="Zheng W."/>
            <person name="Hao B."/>
            <person name="Liu S.-M."/>
            <person name="Wang W."/>
            <person name="Yuan L."/>
            <person name="Cao M."/>
            <person name="McDermott J."/>
            <person name="Samudrala R."/>
            <person name="Wang J."/>
            <person name="Wong G.K.-S."/>
            <person name="Yang H."/>
        </authorList>
    </citation>
    <scope>NUCLEOTIDE SEQUENCE [LARGE SCALE GENOMIC DNA]</scope>
    <source>
        <strain>cv. Nipponbare</strain>
    </source>
</reference>
<reference key="6">
    <citation type="submission" date="2006-10" db="EMBL/GenBank/DDBJ databases">
        <title>Oryza sativa full length cDNA.</title>
        <authorList>
            <consortium name="The rice full-length cDNA consortium"/>
        </authorList>
    </citation>
    <scope>NUCLEOTIDE SEQUENCE [LARGE SCALE MRNA]</scope>
    <source>
        <strain>cv. Nipponbare</strain>
        <tissue>Seedling root</tissue>
    </source>
</reference>
<reference key="7">
    <citation type="journal article" date="2003" name="J. Plant Res.">
        <title>Structure and function of cytokinin oxidase/dehydrogenase genes of maize, rice, Arabidopsis and other species.</title>
        <authorList>
            <person name="Schmuelling T."/>
            <person name="Werner T."/>
            <person name="Riefler M."/>
            <person name="Krupkova E."/>
            <person name="Bartrina y Manns I."/>
        </authorList>
    </citation>
    <scope>REVIEW</scope>
</reference>
<reference key="8">
    <citation type="journal article" date="2018" name="Plant Cell Environ.">
        <title>Knockdown of an inflorescence meristem-specific cytokinin oxidase - OsCKX2 in rice reduces yield penalty under salinity stress condition.</title>
        <authorList>
            <person name="Joshi R."/>
            <person name="Sahoo K.K."/>
            <person name="Tripathi A.K."/>
            <person name="Kumar R."/>
            <person name="Gupta B.K."/>
            <person name="Pareek A."/>
            <person name="Singla-Pareek S.L."/>
        </authorList>
    </citation>
    <scope>FUNCTION</scope>
</reference>
<gene>
    <name evidence="10" type="primary">CKX2</name>
    <name evidence="14" type="ordered locus">Os01g0197700</name>
    <name evidence="11" type="ordered locus">LOC_Os01g10110</name>
    <name evidence="13" type="ORF">B1046G12.8</name>
    <name evidence="15" type="ORF">OsJ_00744</name>
    <name evidence="12" type="ORF">P0419B01.20</name>
</gene>
<protein>
    <recommendedName>
        <fullName evidence="11">Cytokinin dehydrogenase 2</fullName>
        <ecNumber evidence="8">1.5.99.12</ecNumber>
    </recommendedName>
    <alternativeName>
        <fullName evidence="10">Cytokinin oxidase 2</fullName>
        <shortName evidence="10">OsCKX2</shortName>
    </alternativeName>
    <alternativeName>
        <fullName evidence="10">QTL grain number 1a</fullName>
        <shortName evidence="10">Gn1a</shortName>
    </alternativeName>
</protein>
<organism>
    <name type="scientific">Oryza sativa subsp. japonica</name>
    <name type="common">Rice</name>
    <dbReference type="NCBI Taxonomy" id="39947"/>
    <lineage>
        <taxon>Eukaryota</taxon>
        <taxon>Viridiplantae</taxon>
        <taxon>Streptophyta</taxon>
        <taxon>Embryophyta</taxon>
        <taxon>Tracheophyta</taxon>
        <taxon>Spermatophyta</taxon>
        <taxon>Magnoliopsida</taxon>
        <taxon>Liliopsida</taxon>
        <taxon>Poales</taxon>
        <taxon>Poaceae</taxon>
        <taxon>BOP clade</taxon>
        <taxon>Oryzoideae</taxon>
        <taxon>Oryzeae</taxon>
        <taxon>Oryzinae</taxon>
        <taxon>Oryza</taxon>
        <taxon>Oryza sativa</taxon>
    </lineage>
</organism>
<accession>Q4ADV8</accession>
<accession>A0A0P0UZJ1</accession>
<accession>B9ETN0</accession>
<accession>Q94IV9</accession>
<keyword id="KW-0932">Cytokinin signaling pathway</keyword>
<keyword id="KW-0217">Developmental protein</keyword>
<keyword id="KW-0274">FAD</keyword>
<keyword id="KW-0285">Flavoprotein</keyword>
<keyword id="KW-0325">Glycoprotein</keyword>
<keyword id="KW-0560">Oxidoreductase</keyword>
<keyword id="KW-1185">Reference proteome</keyword>
<keyword id="KW-0964">Secreted</keyword>
<keyword id="KW-0732">Signal</keyword>
<proteinExistence type="evidence at protein level"/>
<sequence>MKQEQVRMAVLLMLNCFVKATAPPPWPPSASSASFLDDLGDLGIAPLIRADEAGTARASADFGNLSVAGVGAPRLAAAAAVLYPSRPADIAALLRASCARPAPFAVSARGCGHSVHGQASAPDGVVVDMASLGRLQGGGARRLAVSVEGRYVDAGGEQLWVDVLRASMAHGLTPVSWTDYLHLTVGGTLSNAGISGQAFRHGPQISNVLELDVITGVGEMVTCSKEKAPDLFDAVLGGLGQFGVITRARIPLAPAPARARWVRFVYTTAAAMTADQERLIAVDRAGGAGAVGGLMDYVEGSVHLNQGLVETWRTQPQPPSPSSSSSSSFFSDADEARVAALAKEAGGVLYFLEGAIYFGGAAGPSAADVDKRMDVLRRELRHERGFVFAQDVAYAGFLDRVHDGELKLRAAGLWDVPHPWLNLFLPRSGVLAFADGVFHGILSRTPAMGPVLIYPMNRNKWDSNMSAVITDDDGDEVFYTVGILRSAAAAGDVGRLEEQNDEILGFCEVAGIAYKQYLPYYGSQAEWQKRHFGANLWPRFVQRKSKYDPKAILSRGQGIFTSPLA</sequence>
<comment type="function">
    <text evidence="8 9">Catalyzes the oxidation of cytokinins, a family of N(6)-substituted adenine derivatives that are plant hormones, where the substituent is an isopentenyl group (PubMed:15976269). Is a major QTL involved in grain yield (PubMed:15976269). Modulates the number of reproductive organs by regulating the cytokinin accumulation in inflorescence meristems (PubMed:15976269, PubMed:28337744). Acts as negative regulator of panicle branching (PubMed:15976269, PubMed:28337744).</text>
</comment>
<comment type="catalytic activity">
    <reaction evidence="8">
        <text>N(6)-dimethylallyladenine + A + H2O = 3-methyl-2-butenal + adenine + AH2</text>
        <dbReference type="Rhea" id="RHEA:13625"/>
        <dbReference type="ChEBI" id="CHEBI:13193"/>
        <dbReference type="ChEBI" id="CHEBI:15377"/>
        <dbReference type="ChEBI" id="CHEBI:15825"/>
        <dbReference type="ChEBI" id="CHEBI:16708"/>
        <dbReference type="ChEBI" id="CHEBI:17499"/>
        <dbReference type="ChEBI" id="CHEBI:17660"/>
        <dbReference type="EC" id="1.5.99.12"/>
    </reaction>
    <physiologicalReaction direction="left-to-right" evidence="8">
        <dbReference type="Rhea" id="RHEA:13626"/>
    </physiologicalReaction>
</comment>
<comment type="cofactor">
    <cofactor evidence="2">
        <name>FAD</name>
        <dbReference type="ChEBI" id="CHEBI:57692"/>
    </cofactor>
</comment>
<comment type="subunit">
    <text evidence="1">Monomer.</text>
</comment>
<comment type="subcellular location">
    <subcellularLocation>
        <location evidence="4">Secreted</location>
        <location evidence="4">Extracellular space</location>
    </subcellularLocation>
</comment>
<comment type="tissue specificity">
    <text evidence="8">Mostly expressed in leaves, culms, inflorescence meristems, and flowers, especially in vascular tissues.</text>
</comment>
<comment type="PTM">
    <text evidence="1">Glycosylated.</text>
</comment>
<comment type="disruption phenotype">
    <text evidence="8">Enhanced grain production and higher cytokinin levels in inflorescence meristems.</text>
</comment>
<comment type="similarity">
    <text evidence="11">Belongs to the oxygen-dependent FAD-linked oxidoreductase family.</text>
</comment>
<comment type="sequence caution" evidence="11">
    <conflict type="erroneous initiation">
        <sequence resource="EMBL-CDS" id="BAB56095"/>
    </conflict>
    <text>Truncated N-terminus.</text>
</comment>
<comment type="sequence caution" evidence="11">
    <conflict type="erroneous initiation">
        <sequence resource="EMBL-CDS" id="BAB89407"/>
    </conflict>
    <text>Truncated N-terminus.</text>
</comment>
<comment type="sequence caution" evidence="11">
    <conflict type="erroneous gene model prediction">
        <sequence resource="EMBL-CDS" id="EEE54051"/>
    </conflict>
</comment>
<comment type="sequence caution" evidence="11">
    <conflict type="frameshift">
        <sequence resource="EMBL-CDS" id="EEE54051"/>
    </conflict>
</comment>
<name>CKX2_ORYSJ</name>
<feature type="signal peptide" evidence="6">
    <location>
        <begin position="1"/>
        <end position="20"/>
    </location>
</feature>
<feature type="chain" id="PRO_0000394205" description="Cytokinin dehydrogenase 2">
    <location>
        <begin position="21"/>
        <end position="565"/>
    </location>
</feature>
<feature type="domain" description="FAD-binding PCMH-type" evidence="7">
    <location>
        <begin position="74"/>
        <end position="255"/>
    </location>
</feature>
<feature type="binding site" evidence="3">
    <location>
        <position position="108"/>
    </location>
    <ligand>
        <name>FAD</name>
        <dbReference type="ChEBI" id="CHEBI:57692"/>
    </ligand>
</feature>
<feature type="binding site" evidence="5">
    <location>
        <position position="110"/>
    </location>
    <ligand>
        <name>FAD</name>
        <dbReference type="ChEBI" id="CHEBI:57692"/>
    </ligand>
</feature>
<feature type="binding site" evidence="5">
    <location>
        <position position="112"/>
    </location>
    <ligand>
        <name>FAD</name>
        <dbReference type="ChEBI" id="CHEBI:57692"/>
    </ligand>
</feature>
<feature type="binding site" evidence="5">
    <location>
        <position position="114"/>
    </location>
    <ligand>
        <name>FAD</name>
        <dbReference type="ChEBI" id="CHEBI:57692"/>
    </ligand>
</feature>
<feature type="binding site" evidence="5">
    <location>
        <position position="118"/>
    </location>
    <ligand>
        <name>FAD</name>
        <dbReference type="ChEBI" id="CHEBI:57692"/>
    </ligand>
</feature>
<feature type="binding site" evidence="5">
    <location>
        <position position="179"/>
    </location>
    <ligand>
        <name>FAD</name>
        <dbReference type="ChEBI" id="CHEBI:57692"/>
    </ligand>
</feature>
<feature type="binding site" evidence="5">
    <location>
        <position position="184"/>
    </location>
    <ligand>
        <name>FAD</name>
        <dbReference type="ChEBI" id="CHEBI:57692"/>
    </ligand>
</feature>
<feature type="binding site" evidence="5">
    <location>
        <position position="190"/>
    </location>
    <ligand>
        <name>FAD</name>
        <dbReference type="ChEBI" id="CHEBI:57692"/>
    </ligand>
</feature>
<feature type="binding site" evidence="5">
    <location>
        <position position="194"/>
    </location>
    <ligand>
        <name>FAD</name>
        <dbReference type="ChEBI" id="CHEBI:57692"/>
    </ligand>
</feature>
<feature type="binding site" evidence="5">
    <location>
        <position position="245"/>
    </location>
    <ligand>
        <name>FAD</name>
        <dbReference type="ChEBI" id="CHEBI:57692"/>
    </ligand>
</feature>
<feature type="binding site" evidence="5">
    <location>
        <position position="517"/>
    </location>
    <ligand>
        <name>FAD</name>
        <dbReference type="ChEBI" id="CHEBI:57692"/>
    </ligand>
</feature>
<feature type="binding site" evidence="5">
    <location>
        <position position="554"/>
    </location>
    <ligand>
        <name>FAD</name>
        <dbReference type="ChEBI" id="CHEBI:57692"/>
    </ligand>
</feature>
<feature type="binding site" evidence="5">
    <location>
        <position position="557"/>
    </location>
    <ligand>
        <name>FAD</name>
        <dbReference type="ChEBI" id="CHEBI:57692"/>
    </ligand>
</feature>
<feature type="modified residue" description="Pros-8alpha-FAD histidine" evidence="5">
    <location>
        <position position="113"/>
    </location>
</feature>
<feature type="glycosylation site" description="N-linked (GlcNAc...) asparagine" evidence="6">
    <location>
        <position position="64"/>
    </location>
</feature>
<feature type="glycosylation site" description="N-linked (GlcNAc...) asparagine" evidence="6">
    <location>
        <position position="464"/>
    </location>
</feature>